<evidence type="ECO:0000255" key="1"/>
<evidence type="ECO:0000255" key="2">
    <source>
        <dbReference type="PROSITE-ProRule" id="PRU01256"/>
    </source>
</evidence>
<evidence type="ECO:0000256" key="3">
    <source>
        <dbReference type="SAM" id="MobiDB-lite"/>
    </source>
</evidence>
<evidence type="ECO:0000269" key="4">
    <source>
    </source>
</evidence>
<evidence type="ECO:0000303" key="5">
    <source>
    </source>
</evidence>
<feature type="chain" id="PRO_0000459087" description="Transcription factor ncaA">
    <location>
        <begin position="1"/>
        <end position="575"/>
    </location>
</feature>
<feature type="zinc finger region" description="UBZ4-type; degenerate" evidence="2">
    <location>
        <begin position="39"/>
        <end position="66"/>
    </location>
</feature>
<feature type="region of interest" description="Disordered" evidence="3">
    <location>
        <begin position="1"/>
        <end position="40"/>
    </location>
</feature>
<feature type="region of interest" description="Disordered" evidence="3">
    <location>
        <begin position="79"/>
        <end position="114"/>
    </location>
</feature>
<feature type="region of interest" description="Disordered" evidence="3">
    <location>
        <begin position="429"/>
        <end position="575"/>
    </location>
</feature>
<feature type="coiled-coil region" evidence="1">
    <location>
        <begin position="337"/>
        <end position="371"/>
    </location>
</feature>
<feature type="compositionally biased region" description="Polar residues" evidence="3">
    <location>
        <begin position="1"/>
        <end position="15"/>
    </location>
</feature>
<feature type="compositionally biased region" description="Polar residues" evidence="3">
    <location>
        <begin position="22"/>
        <end position="34"/>
    </location>
</feature>
<feature type="compositionally biased region" description="Basic and acidic residues" evidence="3">
    <location>
        <begin position="93"/>
        <end position="102"/>
    </location>
</feature>
<feature type="compositionally biased region" description="Basic and acidic residues" evidence="3">
    <location>
        <begin position="440"/>
        <end position="454"/>
    </location>
</feature>
<feature type="compositionally biased region" description="Low complexity" evidence="3">
    <location>
        <begin position="455"/>
        <end position="471"/>
    </location>
</feature>
<feature type="compositionally biased region" description="Pro residues" evidence="3">
    <location>
        <begin position="472"/>
        <end position="485"/>
    </location>
</feature>
<feature type="compositionally biased region" description="Polar residues" evidence="3">
    <location>
        <begin position="493"/>
        <end position="513"/>
    </location>
</feature>
<feature type="compositionally biased region" description="Polar residues" evidence="3">
    <location>
        <begin position="538"/>
        <end position="558"/>
    </location>
</feature>
<gene>
    <name evidence="5" type="primary">ncaA</name>
    <name type="ORF">AFUA_6G08010</name>
</gene>
<sequence>MAETTPSRPNDTPENSPGGGDDNQSQSAGQSKNPASVKDRKCQYCHQAFTSSSLGRHLDQYLFKKKPDGVHDVEEIRRIRSGITRRQARTSSGKRDTPERAMGKGPSEHFAGGEYGAKPREGAIRMMFNTPTWHATGVINDIPNPGQTPEGSRFATSQSRTGVIHLPDYASRGASAKDPDTMRALELALREVLDNIKAATSRMRPRLSPFDFDIQSETFPSLCLRLLPPPPSLFSTNPFPSPSSFPLKPPGVEHLDIVRQAIRAKIDQWQSDQLSTQSANNSPGRPPLGLDANMISRSAQQHEDMSLRHLELAFKHWASLPPETRLEAWHLEITRAFAREVEKRKTLDEQLARVQQEANQLRAQVEKLGSCQWPREFALFPPDTLPLPPAVARELDAKESQISPGSPRWDYDSVVAKWKRVVMHDKSMGRVGVGYGNPPLDDRSSADTKARATEEPPASAALASTSTSAPPSAHPPPRALQPAPGPALAASPDQSSSHTGGASAPSSQNTSPYLRSPQAGPQAKRPRLMNGADGGHTSAANPSATAPNTWNPHSHQSLPGSNLASASGPPPSSGA</sequence>
<organism>
    <name type="scientific">Aspergillus fumigatus (strain ATCC MYA-4609 / CBS 101355 / FGSC A1100 / Af293)</name>
    <name type="common">Neosartorya fumigata</name>
    <dbReference type="NCBI Taxonomy" id="330879"/>
    <lineage>
        <taxon>Eukaryota</taxon>
        <taxon>Fungi</taxon>
        <taxon>Dikarya</taxon>
        <taxon>Ascomycota</taxon>
        <taxon>Pezizomycotina</taxon>
        <taxon>Eurotiomycetes</taxon>
        <taxon>Eurotiomycetidae</taxon>
        <taxon>Eurotiales</taxon>
        <taxon>Aspergillaceae</taxon>
        <taxon>Aspergillus</taxon>
        <taxon>Aspergillus subgen. Fumigati</taxon>
    </lineage>
</organism>
<name>NCAA_ASPFU</name>
<accession>Q4WN10</accession>
<comment type="function">
    <text evidence="4">Transcription factor required for normal voriconazole resistance (PubMed:36374043). Contributes to the function of atrR and regulates the expression of the atrR target gene abcG1 (PubMed:36374043).</text>
</comment>
<comment type="subunit">
    <text evidence="4">Interacts with atrR.</text>
</comment>
<comment type="subcellular location">
    <subcellularLocation>
        <location evidence="4">Nucleus</location>
    </subcellularLocation>
</comment>
<protein>
    <recommendedName>
        <fullName evidence="5">Transcription factor ncaA</fullName>
    </recommendedName>
    <alternativeName>
        <fullName evidence="5">Nuclear coactivator of AtrR</fullName>
    </alternativeName>
</protein>
<proteinExistence type="evidence at protein level"/>
<reference key="1">
    <citation type="journal article" date="2005" name="Nature">
        <title>Genomic sequence of the pathogenic and allergenic filamentous fungus Aspergillus fumigatus.</title>
        <authorList>
            <person name="Nierman W.C."/>
            <person name="Pain A."/>
            <person name="Anderson M.J."/>
            <person name="Wortman J.R."/>
            <person name="Kim H.S."/>
            <person name="Arroyo J."/>
            <person name="Berriman M."/>
            <person name="Abe K."/>
            <person name="Archer D.B."/>
            <person name="Bermejo C."/>
            <person name="Bennett J.W."/>
            <person name="Bowyer P."/>
            <person name="Chen D."/>
            <person name="Collins M."/>
            <person name="Coulsen R."/>
            <person name="Davies R."/>
            <person name="Dyer P.S."/>
            <person name="Farman M.L."/>
            <person name="Fedorova N."/>
            <person name="Fedorova N.D."/>
            <person name="Feldblyum T.V."/>
            <person name="Fischer R."/>
            <person name="Fosker N."/>
            <person name="Fraser A."/>
            <person name="Garcia J.L."/>
            <person name="Garcia M.J."/>
            <person name="Goble A."/>
            <person name="Goldman G.H."/>
            <person name="Gomi K."/>
            <person name="Griffith-Jones S."/>
            <person name="Gwilliam R."/>
            <person name="Haas B.J."/>
            <person name="Haas H."/>
            <person name="Harris D.E."/>
            <person name="Horiuchi H."/>
            <person name="Huang J."/>
            <person name="Humphray S."/>
            <person name="Jimenez J."/>
            <person name="Keller N."/>
            <person name="Khouri H."/>
            <person name="Kitamoto K."/>
            <person name="Kobayashi T."/>
            <person name="Konzack S."/>
            <person name="Kulkarni R."/>
            <person name="Kumagai T."/>
            <person name="Lafton A."/>
            <person name="Latge J.-P."/>
            <person name="Li W."/>
            <person name="Lord A."/>
            <person name="Lu C."/>
            <person name="Majoros W.H."/>
            <person name="May G.S."/>
            <person name="Miller B.L."/>
            <person name="Mohamoud Y."/>
            <person name="Molina M."/>
            <person name="Monod M."/>
            <person name="Mouyna I."/>
            <person name="Mulligan S."/>
            <person name="Murphy L.D."/>
            <person name="O'Neil S."/>
            <person name="Paulsen I."/>
            <person name="Penalva M.A."/>
            <person name="Pertea M."/>
            <person name="Price C."/>
            <person name="Pritchard B.L."/>
            <person name="Quail M.A."/>
            <person name="Rabbinowitsch E."/>
            <person name="Rawlins N."/>
            <person name="Rajandream M.A."/>
            <person name="Reichard U."/>
            <person name="Renauld H."/>
            <person name="Robson G.D."/>
            <person name="Rodriguez de Cordoba S."/>
            <person name="Rodriguez-Pena J.M."/>
            <person name="Ronning C.M."/>
            <person name="Rutter S."/>
            <person name="Salzberg S.L."/>
            <person name="Sanchez M."/>
            <person name="Sanchez-Ferrero J.C."/>
            <person name="Saunders D."/>
            <person name="Seeger K."/>
            <person name="Squares R."/>
            <person name="Squares S."/>
            <person name="Takeuchi M."/>
            <person name="Tekaia F."/>
            <person name="Turner G."/>
            <person name="Vazquez de Aldana C.R."/>
            <person name="Weidman J."/>
            <person name="White O."/>
            <person name="Woodward J.R."/>
            <person name="Yu J.-H."/>
            <person name="Fraser C.M."/>
            <person name="Galagan J.E."/>
            <person name="Asai K."/>
            <person name="Machida M."/>
            <person name="Hall N."/>
            <person name="Barrell B.G."/>
            <person name="Denning D.W."/>
        </authorList>
    </citation>
    <scope>NUCLEOTIDE SEQUENCE [LARGE SCALE GENOMIC DNA]</scope>
    <source>
        <strain>ATCC MYA-4609 / CBS 101355 / FGSC A1100 / Af293</strain>
    </source>
</reference>
<reference key="2">
    <citation type="journal article" date="2022" name="MSphere">
        <title>Biochemical identification of a nuclear coactivator protein required for AtrR-Dependent Gene Regulation in Aspergillus fumigatus.</title>
        <authorList>
            <person name="Paul S."/>
            <person name="Ror S."/>
            <person name="McDonald W.H."/>
            <person name="Moye-Rowley W.S."/>
        </authorList>
    </citation>
    <scope>FUNCTION</scope>
    <scope>INTERACTION WITH ATRR</scope>
    <scope>SUBCELLULAR LOCATION</scope>
</reference>
<dbReference type="EMBL" id="AAHF01000006">
    <property type="protein sequence ID" value="EAL88654.1"/>
    <property type="molecule type" value="Genomic_DNA"/>
</dbReference>
<dbReference type="RefSeq" id="XP_750692.1">
    <property type="nucleotide sequence ID" value="XM_745599.1"/>
</dbReference>
<dbReference type="SMR" id="Q4WN10"/>
<dbReference type="STRING" id="330879.Q4WN10"/>
<dbReference type="EnsemblFungi" id="EAL88654">
    <property type="protein sequence ID" value="EAL88654"/>
    <property type="gene ID" value="AFUA_6G08010"/>
</dbReference>
<dbReference type="GeneID" id="3508743"/>
<dbReference type="KEGG" id="afm:AFUA_6G08010"/>
<dbReference type="VEuPathDB" id="FungiDB:Afu6g08010"/>
<dbReference type="eggNOG" id="ENOG502SC6I">
    <property type="taxonomic scope" value="Eukaryota"/>
</dbReference>
<dbReference type="HOGENOM" id="CLU_014177_4_0_1"/>
<dbReference type="InParanoid" id="Q4WN10"/>
<dbReference type="OMA" id="AWKVTCA"/>
<dbReference type="OrthoDB" id="3905365at2759"/>
<dbReference type="Proteomes" id="UP000002530">
    <property type="component" value="Chromosome 6"/>
</dbReference>
<dbReference type="GO" id="GO:0005634">
    <property type="term" value="C:nucleus"/>
    <property type="evidence" value="ECO:0007669"/>
    <property type="project" value="UniProtKB-SubCell"/>
</dbReference>
<dbReference type="GO" id="GO:0008270">
    <property type="term" value="F:zinc ion binding"/>
    <property type="evidence" value="ECO:0007669"/>
    <property type="project" value="UniProtKB-KW"/>
</dbReference>
<keyword id="KW-0175">Coiled coil</keyword>
<keyword id="KW-0479">Metal-binding</keyword>
<keyword id="KW-0539">Nucleus</keyword>
<keyword id="KW-1185">Reference proteome</keyword>
<keyword id="KW-0804">Transcription</keyword>
<keyword id="KW-0805">Transcription regulation</keyword>
<keyword id="KW-0862">Zinc</keyword>
<keyword id="KW-0863">Zinc-finger</keyword>